<protein>
    <recommendedName>
        <fullName evidence="1">Glucose-1-phosphate adenylyltransferase</fullName>
        <ecNumber evidence="1">2.7.7.27</ecNumber>
    </recommendedName>
    <alternativeName>
        <fullName evidence="1">ADP-glucose pyrophosphorylase</fullName>
        <shortName evidence="1">ADPGlc PPase</shortName>
    </alternativeName>
    <alternativeName>
        <fullName evidence="1">ADP-glucose synthase</fullName>
    </alternativeName>
</protein>
<gene>
    <name evidence="1" type="primary">glgC</name>
    <name type="ordered locus">FN0855</name>
</gene>
<comment type="function">
    <text evidence="1">Involved in the biosynthesis of ADP-glucose, a building block required for the elongation reactions to produce glycogen. Catalyzes the reaction between ATP and alpha-D-glucose 1-phosphate (G1P) to produce pyrophosphate and ADP-Glc.</text>
</comment>
<comment type="catalytic activity">
    <reaction evidence="1">
        <text>alpha-D-glucose 1-phosphate + ATP + H(+) = ADP-alpha-D-glucose + diphosphate</text>
        <dbReference type="Rhea" id="RHEA:12120"/>
        <dbReference type="ChEBI" id="CHEBI:15378"/>
        <dbReference type="ChEBI" id="CHEBI:30616"/>
        <dbReference type="ChEBI" id="CHEBI:33019"/>
        <dbReference type="ChEBI" id="CHEBI:57498"/>
        <dbReference type="ChEBI" id="CHEBI:58601"/>
        <dbReference type="EC" id="2.7.7.27"/>
    </reaction>
</comment>
<comment type="pathway">
    <text evidence="1">Glycan biosynthesis; glycogen biosynthesis.</text>
</comment>
<comment type="subunit">
    <text evidence="1">Homotetramer.</text>
</comment>
<comment type="similarity">
    <text evidence="1">Belongs to the bacterial/plant glucose-1-phosphate adenylyltransferase family.</text>
</comment>
<organism>
    <name type="scientific">Fusobacterium nucleatum subsp. nucleatum (strain ATCC 25586 / DSM 15643 / BCRC 10681 / CIP 101130 / JCM 8532 / KCTC 2640 / LMG 13131 / VPI 4355)</name>
    <dbReference type="NCBI Taxonomy" id="190304"/>
    <lineage>
        <taxon>Bacteria</taxon>
        <taxon>Fusobacteriati</taxon>
        <taxon>Fusobacteriota</taxon>
        <taxon>Fusobacteriia</taxon>
        <taxon>Fusobacteriales</taxon>
        <taxon>Fusobacteriaceae</taxon>
        <taxon>Fusobacterium</taxon>
    </lineage>
</organism>
<name>GLGC_FUSNN</name>
<proteinExistence type="inferred from homology"/>
<evidence type="ECO:0000255" key="1">
    <source>
        <dbReference type="HAMAP-Rule" id="MF_00624"/>
    </source>
</evidence>
<sequence length="384" mass="43467">MVMKKKRIIAMILAGGQGTRLKELTEDLAKPAVAFGGKYRIIDFTLTNCSNSGIDTVGVLTQYEPRILNNHIGRGSPWDLDRMDGGVTVLQPHTRKNDEKGWYKGTANAIYQNIKFIEEYDPEYVLILSGDHIYKMNYDKMLQFHIQKDADATIGVFKVPLVDAPSFGIMNTKDDMSIYEFEEKPKEPKSDLASMGIYIFNWKLLKKYLDEDEKDPNSSNDFGKNIIPNMLNDGKKMFAYPFKGYWRDVGTIQSFWDAHMDLLSEDNELDLFDKSWRVNTRQGIYTPSYFTKESKIKNTLIDKGCIVEGEIEHSVIFSGVKIGKNSKIIDSIIMADTEIGDNVTIQKAIIANDVKIVDNIVIGDGKKIAVVGEKKIIDSQSLVK</sequence>
<reference key="1">
    <citation type="journal article" date="2002" name="J. Bacteriol.">
        <title>Genome sequence and analysis of the oral bacterium Fusobacterium nucleatum strain ATCC 25586.</title>
        <authorList>
            <person name="Kapatral V."/>
            <person name="Anderson I."/>
            <person name="Ivanova N."/>
            <person name="Reznik G."/>
            <person name="Los T."/>
            <person name="Lykidis A."/>
            <person name="Bhattacharyya A."/>
            <person name="Bartman A."/>
            <person name="Gardner W."/>
            <person name="Grechkin G."/>
            <person name="Zhu L."/>
            <person name="Vasieva O."/>
            <person name="Chu L."/>
            <person name="Kogan Y."/>
            <person name="Chaga O."/>
            <person name="Goltsman E."/>
            <person name="Bernal A."/>
            <person name="Larsen N."/>
            <person name="D'Souza M."/>
            <person name="Walunas T."/>
            <person name="Pusch G."/>
            <person name="Haselkorn R."/>
            <person name="Fonstein M."/>
            <person name="Kyrpides N.C."/>
            <person name="Overbeek R."/>
        </authorList>
    </citation>
    <scope>NUCLEOTIDE SEQUENCE [LARGE SCALE GENOMIC DNA]</scope>
    <source>
        <strain>ATCC 25586 / DSM 15643 / BCRC 10681 / CIP 101130 / JCM 8532 / KCTC 2640 / LMG 13131 / VPI 4355</strain>
    </source>
</reference>
<dbReference type="EC" id="2.7.7.27" evidence="1"/>
<dbReference type="EMBL" id="AE009951">
    <property type="protein sequence ID" value="AAL95051.1"/>
    <property type="molecule type" value="Genomic_DNA"/>
</dbReference>
<dbReference type="RefSeq" id="NP_603752.1">
    <property type="nucleotide sequence ID" value="NC_003454.1"/>
</dbReference>
<dbReference type="SMR" id="Q8RF63"/>
<dbReference type="FunCoup" id="Q8RF63">
    <property type="interactions" value="123"/>
</dbReference>
<dbReference type="STRING" id="190304.FN0855"/>
<dbReference type="PaxDb" id="190304-FN0855"/>
<dbReference type="EnsemblBacteria" id="AAL95051">
    <property type="protein sequence ID" value="AAL95051"/>
    <property type="gene ID" value="FN0855"/>
</dbReference>
<dbReference type="KEGG" id="fnu:FN0855"/>
<dbReference type="PATRIC" id="fig|190304.8.peg.1416"/>
<dbReference type="eggNOG" id="COG0448">
    <property type="taxonomic scope" value="Bacteria"/>
</dbReference>
<dbReference type="HOGENOM" id="CLU_029499_14_0_0"/>
<dbReference type="InParanoid" id="Q8RF63"/>
<dbReference type="BioCyc" id="FNUC190304:G1FZS-1438-MONOMER"/>
<dbReference type="UniPathway" id="UPA00164"/>
<dbReference type="Proteomes" id="UP000002521">
    <property type="component" value="Chromosome"/>
</dbReference>
<dbReference type="GO" id="GO:0005524">
    <property type="term" value="F:ATP binding"/>
    <property type="evidence" value="ECO:0007669"/>
    <property type="project" value="UniProtKB-KW"/>
</dbReference>
<dbReference type="GO" id="GO:0008878">
    <property type="term" value="F:glucose-1-phosphate adenylyltransferase activity"/>
    <property type="evidence" value="ECO:0007669"/>
    <property type="project" value="UniProtKB-UniRule"/>
</dbReference>
<dbReference type="GO" id="GO:0005978">
    <property type="term" value="P:glycogen biosynthetic process"/>
    <property type="evidence" value="ECO:0007669"/>
    <property type="project" value="UniProtKB-UniRule"/>
</dbReference>
<dbReference type="CDD" id="cd02508">
    <property type="entry name" value="ADP_Glucose_PP"/>
    <property type="match status" value="1"/>
</dbReference>
<dbReference type="CDD" id="cd04651">
    <property type="entry name" value="LbH_G1P_AT_C"/>
    <property type="match status" value="1"/>
</dbReference>
<dbReference type="Gene3D" id="2.160.10.10">
    <property type="entry name" value="Hexapeptide repeat proteins"/>
    <property type="match status" value="1"/>
</dbReference>
<dbReference type="Gene3D" id="3.90.550.10">
    <property type="entry name" value="Spore Coat Polysaccharide Biosynthesis Protein SpsA, Chain A"/>
    <property type="match status" value="1"/>
</dbReference>
<dbReference type="HAMAP" id="MF_00624">
    <property type="entry name" value="GlgC"/>
    <property type="match status" value="1"/>
</dbReference>
<dbReference type="InterPro" id="IPR011831">
    <property type="entry name" value="ADP-Glc_PPase"/>
</dbReference>
<dbReference type="InterPro" id="IPR005836">
    <property type="entry name" value="ADP_Glu_pyroP_CS"/>
</dbReference>
<dbReference type="InterPro" id="IPR023049">
    <property type="entry name" value="GlgC_bac"/>
</dbReference>
<dbReference type="InterPro" id="IPR056818">
    <property type="entry name" value="GlmU/GlgC-like_hexapep"/>
</dbReference>
<dbReference type="InterPro" id="IPR005835">
    <property type="entry name" value="NTP_transferase_dom"/>
</dbReference>
<dbReference type="InterPro" id="IPR029044">
    <property type="entry name" value="Nucleotide-diphossugar_trans"/>
</dbReference>
<dbReference type="InterPro" id="IPR011004">
    <property type="entry name" value="Trimer_LpxA-like_sf"/>
</dbReference>
<dbReference type="NCBIfam" id="TIGR02091">
    <property type="entry name" value="glgC"/>
    <property type="match status" value="1"/>
</dbReference>
<dbReference type="NCBIfam" id="NF003670">
    <property type="entry name" value="PRK05293.1"/>
    <property type="match status" value="1"/>
</dbReference>
<dbReference type="PANTHER" id="PTHR43523:SF2">
    <property type="entry name" value="GLUCOSE-1-PHOSPHATE ADENYLYLTRANSFERASE"/>
    <property type="match status" value="1"/>
</dbReference>
<dbReference type="PANTHER" id="PTHR43523">
    <property type="entry name" value="GLUCOSE-1-PHOSPHATE ADENYLYLTRANSFERASE-RELATED"/>
    <property type="match status" value="1"/>
</dbReference>
<dbReference type="Pfam" id="PF24894">
    <property type="entry name" value="Hexapep_GlmU"/>
    <property type="match status" value="1"/>
</dbReference>
<dbReference type="Pfam" id="PF00483">
    <property type="entry name" value="NTP_transferase"/>
    <property type="match status" value="1"/>
</dbReference>
<dbReference type="SUPFAM" id="SSF53448">
    <property type="entry name" value="Nucleotide-diphospho-sugar transferases"/>
    <property type="match status" value="1"/>
</dbReference>
<dbReference type="SUPFAM" id="SSF51161">
    <property type="entry name" value="Trimeric LpxA-like enzymes"/>
    <property type="match status" value="1"/>
</dbReference>
<dbReference type="PROSITE" id="PS00808">
    <property type="entry name" value="ADP_GLC_PYROPHOSPH_1"/>
    <property type="match status" value="1"/>
</dbReference>
<dbReference type="PROSITE" id="PS00809">
    <property type="entry name" value="ADP_GLC_PYROPHOSPH_2"/>
    <property type="match status" value="1"/>
</dbReference>
<dbReference type="PROSITE" id="PS00810">
    <property type="entry name" value="ADP_GLC_PYROPHOSPH_3"/>
    <property type="match status" value="1"/>
</dbReference>
<keyword id="KW-0067">ATP-binding</keyword>
<keyword id="KW-0119">Carbohydrate metabolism</keyword>
<keyword id="KW-0320">Glycogen biosynthesis</keyword>
<keyword id="KW-0321">Glycogen metabolism</keyword>
<keyword id="KW-0547">Nucleotide-binding</keyword>
<keyword id="KW-0548">Nucleotidyltransferase</keyword>
<keyword id="KW-1185">Reference proteome</keyword>
<keyword id="KW-0808">Transferase</keyword>
<feature type="chain" id="PRO_0000195298" description="Glucose-1-phosphate adenylyltransferase">
    <location>
        <begin position="1"/>
        <end position="384"/>
    </location>
</feature>
<feature type="binding site" evidence="1">
    <location>
        <position position="103"/>
    </location>
    <ligand>
        <name>alpha-D-glucose 1-phosphate</name>
        <dbReference type="ChEBI" id="CHEBI:58601"/>
    </ligand>
</feature>
<feature type="binding site" evidence="1">
    <location>
        <position position="168"/>
    </location>
    <ligand>
        <name>alpha-D-glucose 1-phosphate</name>
        <dbReference type="ChEBI" id="CHEBI:58601"/>
    </ligand>
</feature>
<feature type="binding site" evidence="1">
    <location>
        <begin position="183"/>
        <end position="184"/>
    </location>
    <ligand>
        <name>alpha-D-glucose 1-phosphate</name>
        <dbReference type="ChEBI" id="CHEBI:58601"/>
    </ligand>
</feature>
<feature type="binding site" evidence="1">
    <location>
        <position position="194"/>
    </location>
    <ligand>
        <name>alpha-D-glucose 1-phosphate</name>
        <dbReference type="ChEBI" id="CHEBI:58601"/>
    </ligand>
</feature>
<accession>Q8RF63</accession>